<accession>B7V1F8</accession>
<protein>
    <recommendedName>
        <fullName evidence="1">Ribosome maturation factor RimP</fullName>
    </recommendedName>
</protein>
<sequence length="152" mass="17171">MSSKLEQLQALLAPVVEALGYECWGVEFISQGRHSVLRVYIDRPEGILIDDCEAVSRQVSGILDVEDPISGEYTLEVSSPGMDRPLFTLEQFAKHAGEQVKIRLRSPYEGRRNYQGILRGVEEQDVVVLVDDHEYLLPIDSIDKANIIPRFD</sequence>
<name>RIMP_PSEA8</name>
<keyword id="KW-0963">Cytoplasm</keyword>
<keyword id="KW-0690">Ribosome biogenesis</keyword>
<reference key="1">
    <citation type="journal article" date="2009" name="Genome Res.">
        <title>Newly introduced genomic prophage islands are critical determinants of in vivo competitiveness in the Liverpool epidemic strain of Pseudomonas aeruginosa.</title>
        <authorList>
            <person name="Winstanley C."/>
            <person name="Langille M.G.I."/>
            <person name="Fothergill J.L."/>
            <person name="Kukavica-Ibrulj I."/>
            <person name="Paradis-Bleau C."/>
            <person name="Sanschagrin F."/>
            <person name="Thomson N.R."/>
            <person name="Winsor G.L."/>
            <person name="Quail M.A."/>
            <person name="Lennard N."/>
            <person name="Bignell A."/>
            <person name="Clarke L."/>
            <person name="Seeger K."/>
            <person name="Saunders D."/>
            <person name="Harris D."/>
            <person name="Parkhill J."/>
            <person name="Hancock R.E.W."/>
            <person name="Brinkman F.S.L."/>
            <person name="Levesque R.C."/>
        </authorList>
    </citation>
    <scope>NUCLEOTIDE SEQUENCE [LARGE SCALE GENOMIC DNA]</scope>
    <source>
        <strain>LESB58</strain>
    </source>
</reference>
<dbReference type="EMBL" id="FM209186">
    <property type="protein sequence ID" value="CAW29885.1"/>
    <property type="molecule type" value="Genomic_DNA"/>
</dbReference>
<dbReference type="RefSeq" id="WP_003095193.1">
    <property type="nucleotide sequence ID" value="NC_011770.1"/>
</dbReference>
<dbReference type="SMR" id="B7V1F8"/>
<dbReference type="GeneID" id="77223281"/>
<dbReference type="KEGG" id="pag:PLES_51311"/>
<dbReference type="HOGENOM" id="CLU_070525_1_1_6"/>
<dbReference type="GO" id="GO:0005829">
    <property type="term" value="C:cytosol"/>
    <property type="evidence" value="ECO:0007669"/>
    <property type="project" value="TreeGrafter"/>
</dbReference>
<dbReference type="GO" id="GO:0000028">
    <property type="term" value="P:ribosomal small subunit assembly"/>
    <property type="evidence" value="ECO:0007669"/>
    <property type="project" value="TreeGrafter"/>
</dbReference>
<dbReference type="GO" id="GO:0006412">
    <property type="term" value="P:translation"/>
    <property type="evidence" value="ECO:0007669"/>
    <property type="project" value="TreeGrafter"/>
</dbReference>
<dbReference type="CDD" id="cd01734">
    <property type="entry name" value="YlxS_C"/>
    <property type="match status" value="1"/>
</dbReference>
<dbReference type="FunFam" id="2.30.30.180:FF:000004">
    <property type="entry name" value="Ribosome maturation factor RimP"/>
    <property type="match status" value="1"/>
</dbReference>
<dbReference type="FunFam" id="3.30.300.70:FF:000001">
    <property type="entry name" value="Ribosome maturation factor RimP"/>
    <property type="match status" value="1"/>
</dbReference>
<dbReference type="Gene3D" id="2.30.30.180">
    <property type="entry name" value="Ribosome maturation factor RimP, C-terminal domain"/>
    <property type="match status" value="1"/>
</dbReference>
<dbReference type="Gene3D" id="3.30.300.70">
    <property type="entry name" value="RimP-like superfamily, N-terminal"/>
    <property type="match status" value="1"/>
</dbReference>
<dbReference type="HAMAP" id="MF_01077">
    <property type="entry name" value="RimP"/>
    <property type="match status" value="1"/>
</dbReference>
<dbReference type="InterPro" id="IPR003728">
    <property type="entry name" value="Ribosome_maturation_RimP"/>
</dbReference>
<dbReference type="InterPro" id="IPR028998">
    <property type="entry name" value="RimP_C"/>
</dbReference>
<dbReference type="InterPro" id="IPR036847">
    <property type="entry name" value="RimP_C_sf"/>
</dbReference>
<dbReference type="InterPro" id="IPR028989">
    <property type="entry name" value="RimP_N"/>
</dbReference>
<dbReference type="InterPro" id="IPR035956">
    <property type="entry name" value="RimP_N_sf"/>
</dbReference>
<dbReference type="NCBIfam" id="NF000927">
    <property type="entry name" value="PRK00092.1-1"/>
    <property type="match status" value="1"/>
</dbReference>
<dbReference type="PANTHER" id="PTHR33867">
    <property type="entry name" value="RIBOSOME MATURATION FACTOR RIMP"/>
    <property type="match status" value="1"/>
</dbReference>
<dbReference type="PANTHER" id="PTHR33867:SF1">
    <property type="entry name" value="RIBOSOME MATURATION FACTOR RIMP"/>
    <property type="match status" value="1"/>
</dbReference>
<dbReference type="Pfam" id="PF17384">
    <property type="entry name" value="DUF150_C"/>
    <property type="match status" value="1"/>
</dbReference>
<dbReference type="Pfam" id="PF02576">
    <property type="entry name" value="RimP_N"/>
    <property type="match status" value="1"/>
</dbReference>
<dbReference type="SUPFAM" id="SSF74942">
    <property type="entry name" value="YhbC-like, C-terminal domain"/>
    <property type="match status" value="1"/>
</dbReference>
<dbReference type="SUPFAM" id="SSF75420">
    <property type="entry name" value="YhbC-like, N-terminal domain"/>
    <property type="match status" value="1"/>
</dbReference>
<comment type="function">
    <text evidence="1">Required for maturation of 30S ribosomal subunits.</text>
</comment>
<comment type="subcellular location">
    <subcellularLocation>
        <location evidence="1">Cytoplasm</location>
    </subcellularLocation>
</comment>
<comment type="similarity">
    <text evidence="1">Belongs to the RimP family.</text>
</comment>
<gene>
    <name evidence="1" type="primary">rimP</name>
    <name type="ordered locus">PLES_51311</name>
</gene>
<proteinExistence type="inferred from homology"/>
<feature type="chain" id="PRO_1000136789" description="Ribosome maturation factor RimP">
    <location>
        <begin position="1"/>
        <end position="152"/>
    </location>
</feature>
<organism>
    <name type="scientific">Pseudomonas aeruginosa (strain LESB58)</name>
    <dbReference type="NCBI Taxonomy" id="557722"/>
    <lineage>
        <taxon>Bacteria</taxon>
        <taxon>Pseudomonadati</taxon>
        <taxon>Pseudomonadota</taxon>
        <taxon>Gammaproteobacteria</taxon>
        <taxon>Pseudomonadales</taxon>
        <taxon>Pseudomonadaceae</taxon>
        <taxon>Pseudomonas</taxon>
    </lineage>
</organism>
<evidence type="ECO:0000255" key="1">
    <source>
        <dbReference type="HAMAP-Rule" id="MF_01077"/>
    </source>
</evidence>